<keyword id="KW-0051">Antiviral defense</keyword>
<keyword id="KW-0460">Magnesium</keyword>
<keyword id="KW-0479">Metal-binding</keyword>
<keyword id="KW-0548">Nucleotidyltransferase</keyword>
<keyword id="KW-0695">RNA-directed DNA polymerase</keyword>
<keyword id="KW-0808">Transferase</keyword>
<keyword id="KW-0814">Transposable element</keyword>
<reference key="1">
    <citation type="journal article" date="1989" name="Cell">
        <title>Reverse transcriptase associated with the biosynthesis of the branched RNA-linked msDNA in Myxococcus xanthus.</title>
        <authorList>
            <person name="Inouye S."/>
            <person name="Hsu M.Y."/>
            <person name="Eagle S."/>
            <person name="Inouye M."/>
        </authorList>
    </citation>
    <scope>NUCLEOTIDE SEQUENCE [GENOMIC DNA]</scope>
</reference>
<reference key="2">
    <citation type="journal article" date="1987" name="Cell">
        <title>Structure of msDNA from Myxococcus xanthus: evidence for a long, self-annealing RNA precursor for the covalently linked, branched RNA.</title>
        <authorList>
            <person name="Dhundale A."/>
            <person name="Lampson B."/>
            <person name="Furuichi T."/>
            <person name="Inouye M."/>
            <person name="Inouye S."/>
        </authorList>
    </citation>
    <scope>MSDNA IDENTIFICATION</scope>
    <scope>ACTIVITY REGULATION</scope>
    <source>
        <strain>DZF1</strain>
    </source>
</reference>
<reference key="3">
    <citation type="journal article" date="1988" name="J. Bacteriol.">
        <title>Mutations that affect production of branched RNA-linked msDNA in Myxococcus xanthus.</title>
        <authorList>
            <person name="Dhundale A."/>
            <person name="Furuichi T."/>
            <person name="Inouye M."/>
            <person name="Inouye S."/>
        </authorList>
    </citation>
    <scope>FUNCTION</scope>
    <scope>DISRUPTION PHENOTYPE</scope>
    <source>
        <strain>DZF1</strain>
    </source>
</reference>
<reference key="4">
    <citation type="journal article" date="1989" name="Cell">
        <title>Reverse transcriptase with concomitant ribonuclease H activity in the cell-free synthesis of branched RNA-linked msDNA of Myxococcus xanthus.</title>
        <authorList>
            <person name="Lampson B.C."/>
            <person name="Inouye M."/>
            <person name="Inouye S."/>
        </authorList>
    </citation>
    <scope>FUNCTION</scope>
    <scope>MODEL OF THE REACTION MECHANISM</scope>
    <source>
        <strain>DZF1</strain>
    </source>
</reference>
<organism>
    <name type="scientific">Myxococcus xanthus</name>
    <dbReference type="NCBI Taxonomy" id="34"/>
    <lineage>
        <taxon>Bacteria</taxon>
        <taxon>Pseudomonadati</taxon>
        <taxon>Myxococcota</taxon>
        <taxon>Myxococcia</taxon>
        <taxon>Myxococcales</taxon>
        <taxon>Cystobacterineae</taxon>
        <taxon>Myxococcaceae</taxon>
        <taxon>Myxococcus</taxon>
    </lineage>
</organism>
<protein>
    <recommendedName>
        <fullName evidence="6">Retron Mx162 reverse transcriptase</fullName>
        <shortName>Mx162-RT</shortName>
        <ecNumber evidence="2">2.7.7.49</ecNumber>
    </recommendedName>
    <alternativeName>
        <fullName>RNA-directed DNA polymerase from retron Mx162</fullName>
    </alternativeName>
</protein>
<comment type="function">
    <text evidence="1 7 9 10">Reverse transcriptase (RT) responsible for synthesis of msDNA-Mx162 (a branched molecule with RNA linked by a 2',5'-phosphodiester bond to ssDNA). The retron transcript serves as primer (from a conserved internal G residue) and template for the reaction, and codes for the RT (Probable). The retron is involved in antiviral defense (By similarity).</text>
</comment>
<comment type="catalytic activity">
    <reaction evidence="2 7 8 9">
        <text>DNA(n) + a 2'-deoxyribonucleoside 5'-triphosphate = DNA(n+1) + diphosphate</text>
        <dbReference type="Rhea" id="RHEA:22508"/>
        <dbReference type="Rhea" id="RHEA-COMP:17339"/>
        <dbReference type="Rhea" id="RHEA-COMP:17340"/>
        <dbReference type="ChEBI" id="CHEBI:33019"/>
        <dbReference type="ChEBI" id="CHEBI:61560"/>
        <dbReference type="ChEBI" id="CHEBI:173112"/>
        <dbReference type="EC" id="2.7.7.49"/>
    </reaction>
</comment>
<comment type="activity regulation">
    <text evidence="4">msDNA synthesis is inhibited by rifampicin and chloramphenicol.</text>
</comment>
<comment type="disruption phenotype">
    <text evidence="5">No production of msDNA. No other visible effect on growth, morphogenesis, fruiting body formation, spore germination or cell motility.</text>
</comment>
<comment type="miscellaneous">
    <text>M.xanthus contains two independent and unlinked retrons: Mx65 and Mx162.</text>
</comment>
<comment type="miscellaneous">
    <text>Retrons may be the ancestors of retrovirus.</text>
</comment>
<comment type="similarity">
    <text evidence="6">Belongs to the bacterial reverse transcriptase family.</text>
</comment>
<name>RT162_MYXXA</name>
<feature type="chain" id="PRO_0000097503" description="Retron Mx162 reverse transcriptase">
    <location>
        <begin position="1"/>
        <end position="485"/>
    </location>
</feature>
<feature type="domain" description="Reverse transcriptase" evidence="2">
    <location>
        <begin position="167"/>
        <end position="407"/>
    </location>
</feature>
<feature type="region of interest" description="Disordered" evidence="3">
    <location>
        <begin position="1"/>
        <end position="33"/>
    </location>
</feature>
<feature type="binding site" evidence="2">
    <location>
        <position position="250"/>
    </location>
    <ligand>
        <name>Mg(2+)</name>
        <dbReference type="ChEBI" id="CHEBI:18420"/>
        <note>catalytic</note>
    </ligand>
</feature>
<feature type="binding site" evidence="2">
    <location>
        <position position="346"/>
    </location>
    <ligand>
        <name>Mg(2+)</name>
        <dbReference type="ChEBI" id="CHEBI:18420"/>
        <note>catalytic</note>
    </ligand>
</feature>
<feature type="binding site" evidence="2">
    <location>
        <position position="347"/>
    </location>
    <ligand>
        <name>Mg(2+)</name>
        <dbReference type="ChEBI" id="CHEBI:18420"/>
        <note>catalytic</note>
    </ligand>
</feature>
<accession>P23072</accession>
<evidence type="ECO:0000250" key="1">
    <source>
        <dbReference type="UniProtKB" id="P71276"/>
    </source>
</evidence>
<evidence type="ECO:0000255" key="2">
    <source>
        <dbReference type="PROSITE-ProRule" id="PRU00405"/>
    </source>
</evidence>
<evidence type="ECO:0000256" key="3">
    <source>
        <dbReference type="SAM" id="MobiDB-lite"/>
    </source>
</evidence>
<evidence type="ECO:0000269" key="4">
    <source>
    </source>
</evidence>
<evidence type="ECO:0000269" key="5">
    <source>
    </source>
</evidence>
<evidence type="ECO:0000305" key="6"/>
<evidence type="ECO:0000305" key="7">
    <source>
    </source>
</evidence>
<evidence type="ECO:0000305" key="8">
    <source>
    </source>
</evidence>
<evidence type="ECO:0000305" key="9">
    <source>
    </source>
</evidence>
<evidence type="ECO:0000305" key="10">
    <source>
    </source>
</evidence>
<proteinExistence type="inferred from homology"/>
<dbReference type="EC" id="2.7.7.49" evidence="2"/>
<dbReference type="EMBL" id="M24392">
    <property type="protein sequence ID" value="AAA25405.1"/>
    <property type="molecule type" value="Genomic_DNA"/>
</dbReference>
<dbReference type="PIR" id="A31878">
    <property type="entry name" value="RRYC62"/>
</dbReference>
<dbReference type="SMR" id="P23072"/>
<dbReference type="GO" id="GO:0046872">
    <property type="term" value="F:metal ion binding"/>
    <property type="evidence" value="ECO:0007669"/>
    <property type="project" value="UniProtKB-KW"/>
</dbReference>
<dbReference type="GO" id="GO:0003723">
    <property type="term" value="F:RNA binding"/>
    <property type="evidence" value="ECO:0007669"/>
    <property type="project" value="InterPro"/>
</dbReference>
<dbReference type="GO" id="GO:0003964">
    <property type="term" value="F:RNA-directed DNA polymerase activity"/>
    <property type="evidence" value="ECO:0007669"/>
    <property type="project" value="UniProtKB-KW"/>
</dbReference>
<dbReference type="GO" id="GO:0051607">
    <property type="term" value="P:defense response to virus"/>
    <property type="evidence" value="ECO:0007669"/>
    <property type="project" value="UniProtKB-KW"/>
</dbReference>
<dbReference type="CDD" id="cd03487">
    <property type="entry name" value="RT_Bac_retron_II"/>
    <property type="match status" value="1"/>
</dbReference>
<dbReference type="InterPro" id="IPR043502">
    <property type="entry name" value="DNA/RNA_pol_sf"/>
</dbReference>
<dbReference type="InterPro" id="IPR051083">
    <property type="entry name" value="GrpII_Intron_Splice-Mob/Def"/>
</dbReference>
<dbReference type="InterPro" id="IPR000123">
    <property type="entry name" value="Reverse_transcriptase_msDNA"/>
</dbReference>
<dbReference type="InterPro" id="IPR000477">
    <property type="entry name" value="RT_dom"/>
</dbReference>
<dbReference type="PANTHER" id="PTHR34047">
    <property type="entry name" value="NUCLEAR INTRON MATURASE 1, MITOCHONDRIAL-RELATED"/>
    <property type="match status" value="1"/>
</dbReference>
<dbReference type="PANTHER" id="PTHR34047:SF7">
    <property type="entry name" value="RNA-DIRECTED DNA POLYMERASE"/>
    <property type="match status" value="1"/>
</dbReference>
<dbReference type="Pfam" id="PF00078">
    <property type="entry name" value="RVT_1"/>
    <property type="match status" value="1"/>
</dbReference>
<dbReference type="PRINTS" id="PR00866">
    <property type="entry name" value="RNADNAPOLMS"/>
</dbReference>
<dbReference type="SUPFAM" id="SSF56672">
    <property type="entry name" value="DNA/RNA polymerases"/>
    <property type="match status" value="1"/>
</dbReference>
<dbReference type="PROSITE" id="PS50878">
    <property type="entry name" value="RT_POL"/>
    <property type="match status" value="1"/>
</dbReference>
<sequence length="485" mass="53018">MTARLDPFVPAASPQAVPTPELTAPSSDAAAKREARRLAHEALLVRAKAIDEAGGADDWVQAQLVSKGLAVEDLDFSSASEKDKKAWKEKKKAEATERRALKRQAHEAWKATHVGHLGAGVHWAEDRLADAFDVPHREERARANGLTELDSAEALAKALGLSVSKLRWFAFHREVDTATHYVSWTIPKRDGSKRTITSPKPELKAAQRWVLSNVVERLPVHGAAHGFVAGRSILTNALAHQGADVVVKVDLKDFFPSVTWRRVKGLLRKGGLREGTSTLLSLLSTEAPREAVQFRGKLLHVAKGPRALPQGAPTSPGITNALCLKLDKRLSALAKRLGFTYTRYADDLTFSWTKAKQPKPRRTQRPPVAVLLSRVQEVVEAEGFRVHPDKTRVARKGTRQRVTGLVVNAAGKDAPAARVPRDVVRQLRAAIHNRKKGKPGREGESLEQLKGMAAFIHMTDPAKGRAFLAQLTELESTASAAPQAE</sequence>